<feature type="chain" id="PRO_1000076689" description="DNA mismatch repair protein MutL">
    <location>
        <begin position="1"/>
        <end position="617"/>
    </location>
</feature>
<sequence>MIIRHLSENIINQIAAGEVIERPANVVKELVENAIDAGATRIEIITANGGKNFIKVSDNGCGIPADQLTLAVSRHCTSKITDDVHNICFLGFRGEALPSIGSVAKLKLISRTKEAENAAEISVTAGKIVGPKPAAANLGTIVEVRDLFFVTPARLKFMKTDRAETNAISDMIKRIAIAFPHIRFSLSGLDRTSMELSATENNTQGQLQRITQIMGKEFAPNSIALDAERESVRLTGFACLPSFNRNNSLHQFAYVNGRPVRDKFLWGAIRGAYADVMTRDRYPVAILFIDLPPAEVDVNVHPAKADVRFRDPGLIRGLIVGAIREALQQSGIRPTSTRSEAMLAAFQTQKPLTQQSLGNFKNAHQSSSYSPQSHHFATASMVHKPLDSTNSFGLKENATPIMEGLNTPSGDAYIPSTIPSSEELSYPLGAARAQIHKNYIIAQTQDSLIIVDQHAAHERLVYEALKNALYAKPLPSQLLLIPEIVELSEEDATCLLTHKDALQKFGLGIEPFGPGAILVRETPSMLGKINVQALIKDLADEAAEYDTTNNLKAMLDYVAATMACHGSIRSGRLLRPEEMNRLLRQMEAIPNTSTCNHGRPTYIELKLADIERLFGRK</sequence>
<name>MUTL_BART1</name>
<organism>
    <name type="scientific">Bartonella tribocorum (strain CIP 105476 / IBS 506)</name>
    <dbReference type="NCBI Taxonomy" id="382640"/>
    <lineage>
        <taxon>Bacteria</taxon>
        <taxon>Pseudomonadati</taxon>
        <taxon>Pseudomonadota</taxon>
        <taxon>Alphaproteobacteria</taxon>
        <taxon>Hyphomicrobiales</taxon>
        <taxon>Bartonellaceae</taxon>
        <taxon>Bartonella</taxon>
    </lineage>
</organism>
<accession>A9IN82</accession>
<reference key="1">
    <citation type="journal article" date="2007" name="Nat. Genet.">
        <title>Genomic analysis of Bartonella identifies type IV secretion systems as host adaptability factors.</title>
        <authorList>
            <person name="Saenz H.L."/>
            <person name="Engel P."/>
            <person name="Stoeckli M.C."/>
            <person name="Lanz C."/>
            <person name="Raddatz G."/>
            <person name="Vayssier-Taussat M."/>
            <person name="Birtles R."/>
            <person name="Schuster S.C."/>
            <person name="Dehio C."/>
        </authorList>
    </citation>
    <scope>NUCLEOTIDE SEQUENCE [LARGE SCALE GENOMIC DNA]</scope>
    <source>
        <strain>CIP 105476 / IBS 506</strain>
    </source>
</reference>
<comment type="function">
    <text evidence="1">This protein is involved in the repair of mismatches in DNA. It is required for dam-dependent methyl-directed DNA mismatch repair. May act as a 'molecular matchmaker', a protein that promotes the formation of a stable complex between two or more DNA-binding proteins in an ATP-dependent manner without itself being part of a final effector complex.</text>
</comment>
<comment type="similarity">
    <text evidence="1">Belongs to the DNA mismatch repair MutL/HexB family.</text>
</comment>
<keyword id="KW-0227">DNA damage</keyword>
<keyword id="KW-0234">DNA repair</keyword>
<proteinExistence type="inferred from homology"/>
<protein>
    <recommendedName>
        <fullName evidence="1">DNA mismatch repair protein MutL</fullName>
    </recommendedName>
</protein>
<evidence type="ECO:0000255" key="1">
    <source>
        <dbReference type="HAMAP-Rule" id="MF_00149"/>
    </source>
</evidence>
<dbReference type="EMBL" id="AM260525">
    <property type="protein sequence ID" value="CAK00764.1"/>
    <property type="molecule type" value="Genomic_DNA"/>
</dbReference>
<dbReference type="RefSeq" id="WP_012230736.1">
    <property type="nucleotide sequence ID" value="NC_010161.1"/>
</dbReference>
<dbReference type="SMR" id="A9IN82"/>
<dbReference type="KEGG" id="btr:BT_0298"/>
<dbReference type="eggNOG" id="COG0323">
    <property type="taxonomic scope" value="Bacteria"/>
</dbReference>
<dbReference type="HOGENOM" id="CLU_004131_4_2_5"/>
<dbReference type="Proteomes" id="UP000001592">
    <property type="component" value="Chromosome"/>
</dbReference>
<dbReference type="GO" id="GO:0032300">
    <property type="term" value="C:mismatch repair complex"/>
    <property type="evidence" value="ECO:0007669"/>
    <property type="project" value="InterPro"/>
</dbReference>
<dbReference type="GO" id="GO:0005524">
    <property type="term" value="F:ATP binding"/>
    <property type="evidence" value="ECO:0007669"/>
    <property type="project" value="InterPro"/>
</dbReference>
<dbReference type="GO" id="GO:0016887">
    <property type="term" value="F:ATP hydrolysis activity"/>
    <property type="evidence" value="ECO:0007669"/>
    <property type="project" value="InterPro"/>
</dbReference>
<dbReference type="GO" id="GO:0140664">
    <property type="term" value="F:ATP-dependent DNA damage sensor activity"/>
    <property type="evidence" value="ECO:0007669"/>
    <property type="project" value="InterPro"/>
</dbReference>
<dbReference type="GO" id="GO:0030983">
    <property type="term" value="F:mismatched DNA binding"/>
    <property type="evidence" value="ECO:0007669"/>
    <property type="project" value="InterPro"/>
</dbReference>
<dbReference type="GO" id="GO:0006298">
    <property type="term" value="P:mismatch repair"/>
    <property type="evidence" value="ECO:0007669"/>
    <property type="project" value="UniProtKB-UniRule"/>
</dbReference>
<dbReference type="CDD" id="cd16926">
    <property type="entry name" value="HATPase_MutL-MLH-PMS-like"/>
    <property type="match status" value="1"/>
</dbReference>
<dbReference type="CDD" id="cd00782">
    <property type="entry name" value="MutL_Trans"/>
    <property type="match status" value="1"/>
</dbReference>
<dbReference type="FunFam" id="3.30.565.10:FF:000003">
    <property type="entry name" value="DNA mismatch repair endonuclease MutL"/>
    <property type="match status" value="1"/>
</dbReference>
<dbReference type="Gene3D" id="3.30.230.10">
    <property type="match status" value="1"/>
</dbReference>
<dbReference type="Gene3D" id="3.30.565.10">
    <property type="entry name" value="Histidine kinase-like ATPase, C-terminal domain"/>
    <property type="match status" value="1"/>
</dbReference>
<dbReference type="Gene3D" id="3.30.1540.20">
    <property type="entry name" value="MutL, C-terminal domain, dimerisation subdomain"/>
    <property type="match status" value="1"/>
</dbReference>
<dbReference type="Gene3D" id="3.30.1370.100">
    <property type="entry name" value="MutL, C-terminal domain, regulatory subdomain"/>
    <property type="match status" value="1"/>
</dbReference>
<dbReference type="HAMAP" id="MF_00149">
    <property type="entry name" value="DNA_mis_repair"/>
    <property type="match status" value="1"/>
</dbReference>
<dbReference type="InterPro" id="IPR014762">
    <property type="entry name" value="DNA_mismatch_repair_CS"/>
</dbReference>
<dbReference type="InterPro" id="IPR020667">
    <property type="entry name" value="DNA_mismatch_repair_MutL"/>
</dbReference>
<dbReference type="InterPro" id="IPR013507">
    <property type="entry name" value="DNA_mismatch_S5_2-like"/>
</dbReference>
<dbReference type="InterPro" id="IPR036890">
    <property type="entry name" value="HATPase_C_sf"/>
</dbReference>
<dbReference type="InterPro" id="IPR002099">
    <property type="entry name" value="MutL/Mlh/PMS"/>
</dbReference>
<dbReference type="InterPro" id="IPR038973">
    <property type="entry name" value="MutL/Mlh/Pms-like"/>
</dbReference>
<dbReference type="InterPro" id="IPR014790">
    <property type="entry name" value="MutL_C"/>
</dbReference>
<dbReference type="InterPro" id="IPR042120">
    <property type="entry name" value="MutL_C_dimsub"/>
</dbReference>
<dbReference type="InterPro" id="IPR042121">
    <property type="entry name" value="MutL_C_regsub"/>
</dbReference>
<dbReference type="InterPro" id="IPR037198">
    <property type="entry name" value="MutL_C_sf"/>
</dbReference>
<dbReference type="InterPro" id="IPR020568">
    <property type="entry name" value="Ribosomal_Su5_D2-typ_SF"/>
</dbReference>
<dbReference type="InterPro" id="IPR014721">
    <property type="entry name" value="Ribsml_uS5_D2-typ_fold_subgr"/>
</dbReference>
<dbReference type="NCBIfam" id="TIGR00585">
    <property type="entry name" value="mutl"/>
    <property type="match status" value="1"/>
</dbReference>
<dbReference type="NCBIfam" id="NF000953">
    <property type="entry name" value="PRK00095.2-4"/>
    <property type="match status" value="1"/>
</dbReference>
<dbReference type="PANTHER" id="PTHR10073">
    <property type="entry name" value="DNA MISMATCH REPAIR PROTEIN MLH, PMS, MUTL"/>
    <property type="match status" value="1"/>
</dbReference>
<dbReference type="PANTHER" id="PTHR10073:SF12">
    <property type="entry name" value="DNA MISMATCH REPAIR PROTEIN MLH1"/>
    <property type="match status" value="1"/>
</dbReference>
<dbReference type="Pfam" id="PF01119">
    <property type="entry name" value="DNA_mis_repair"/>
    <property type="match status" value="1"/>
</dbReference>
<dbReference type="Pfam" id="PF13589">
    <property type="entry name" value="HATPase_c_3"/>
    <property type="match status" value="1"/>
</dbReference>
<dbReference type="Pfam" id="PF08676">
    <property type="entry name" value="MutL_C"/>
    <property type="match status" value="1"/>
</dbReference>
<dbReference type="SMART" id="SM01340">
    <property type="entry name" value="DNA_mis_repair"/>
    <property type="match status" value="1"/>
</dbReference>
<dbReference type="SMART" id="SM00853">
    <property type="entry name" value="MutL_C"/>
    <property type="match status" value="1"/>
</dbReference>
<dbReference type="SUPFAM" id="SSF55874">
    <property type="entry name" value="ATPase domain of HSP90 chaperone/DNA topoisomerase II/histidine kinase"/>
    <property type="match status" value="1"/>
</dbReference>
<dbReference type="SUPFAM" id="SSF118116">
    <property type="entry name" value="DNA mismatch repair protein MutL"/>
    <property type="match status" value="1"/>
</dbReference>
<dbReference type="SUPFAM" id="SSF54211">
    <property type="entry name" value="Ribosomal protein S5 domain 2-like"/>
    <property type="match status" value="1"/>
</dbReference>
<dbReference type="PROSITE" id="PS00058">
    <property type="entry name" value="DNA_MISMATCH_REPAIR_1"/>
    <property type="match status" value="1"/>
</dbReference>
<gene>
    <name evidence="1" type="primary">mutL</name>
    <name type="ordered locus">BT_0298</name>
</gene>